<organism>
    <name type="scientific">Helicobacter pylori (strain J99 / ATCC 700824)</name>
    <name type="common">Campylobacter pylori J99</name>
    <dbReference type="NCBI Taxonomy" id="85963"/>
    <lineage>
        <taxon>Bacteria</taxon>
        <taxon>Pseudomonadati</taxon>
        <taxon>Campylobacterota</taxon>
        <taxon>Epsilonproteobacteria</taxon>
        <taxon>Campylobacterales</taxon>
        <taxon>Helicobacteraceae</taxon>
        <taxon>Helicobacter</taxon>
    </lineage>
</organism>
<gene>
    <name evidence="1" type="primary">aroB</name>
    <name type="ordered locus">jhp_0268</name>
</gene>
<proteinExistence type="inferred from homology"/>
<evidence type="ECO:0000255" key="1">
    <source>
        <dbReference type="HAMAP-Rule" id="MF_00110"/>
    </source>
</evidence>
<evidence type="ECO:0000305" key="2"/>
<name>AROB_HELPJ</name>
<comment type="function">
    <text evidence="1">Catalyzes the conversion of 3-deoxy-D-arabino-heptulosonate 7-phosphate (DAHP) to dehydroquinate (DHQ).</text>
</comment>
<comment type="catalytic activity">
    <reaction evidence="1">
        <text>7-phospho-2-dehydro-3-deoxy-D-arabino-heptonate = 3-dehydroquinate + phosphate</text>
        <dbReference type="Rhea" id="RHEA:21968"/>
        <dbReference type="ChEBI" id="CHEBI:32364"/>
        <dbReference type="ChEBI" id="CHEBI:43474"/>
        <dbReference type="ChEBI" id="CHEBI:58394"/>
        <dbReference type="EC" id="4.2.3.4"/>
    </reaction>
</comment>
<comment type="cofactor">
    <cofactor evidence="1">
        <name>NAD(+)</name>
        <dbReference type="ChEBI" id="CHEBI:57540"/>
    </cofactor>
</comment>
<comment type="cofactor">
    <cofactor evidence="1">
        <name>Co(2+)</name>
        <dbReference type="ChEBI" id="CHEBI:48828"/>
    </cofactor>
    <cofactor evidence="1">
        <name>Zn(2+)</name>
        <dbReference type="ChEBI" id="CHEBI:29105"/>
    </cofactor>
    <text evidence="1">Binds 1 divalent metal cation per subunit. Can use either Co(2+) or Zn(2+).</text>
</comment>
<comment type="pathway">
    <text evidence="1">Metabolic intermediate biosynthesis; chorismate biosynthesis; chorismate from D-erythrose 4-phosphate and phosphoenolpyruvate: step 2/7.</text>
</comment>
<comment type="subcellular location">
    <subcellularLocation>
        <location evidence="1">Cytoplasm</location>
    </subcellularLocation>
</comment>
<comment type="similarity">
    <text evidence="1 2">Belongs to the sugar phosphate cyclases superfamily. Dehydroquinate synthase family.</text>
</comment>
<accession>Q9ZMF2</accession>
<sequence>MQEILIPLKEKSYKVFLGELPEIKLKQKALIISDSIVAGLHLPYLLERLNALEVRVCVIESGEKYKNFHSLERILNNAFEMQLNRHSLMIALGGGVISDMVGFASSIYFRGIDFINIPTTLLAQVDASVGGKTGINTPYGKNLIGSFHQPKAVYMDLAFLKTLEKREFQAGVAEIIKMAVCFDKNLVERLETKDLKDCLEEVIFQSVNIKAQVVVQDEKERNIRAGLNYGHTFGMLIENETNYERFLHGEAIAIGMRMANDLALSLGMLTLKEYERIENLLKKFDLIFNYQITDIQKFYERLFLDKKSENQTLKFILPKGVGAFEIASHIPKETILKVLEKWH</sequence>
<keyword id="KW-0028">Amino-acid biosynthesis</keyword>
<keyword id="KW-0057">Aromatic amino acid biosynthesis</keyword>
<keyword id="KW-0170">Cobalt</keyword>
<keyword id="KW-0963">Cytoplasm</keyword>
<keyword id="KW-0456">Lyase</keyword>
<keyword id="KW-0479">Metal-binding</keyword>
<keyword id="KW-0520">NAD</keyword>
<keyword id="KW-0547">Nucleotide-binding</keyword>
<keyword id="KW-0862">Zinc</keyword>
<protein>
    <recommendedName>
        <fullName evidence="1">3-dehydroquinate synthase</fullName>
        <shortName evidence="1">DHQS</shortName>
        <ecNumber evidence="1">4.2.3.4</ecNumber>
    </recommendedName>
</protein>
<feature type="chain" id="PRO_0000140746" description="3-dehydroquinate synthase">
    <location>
        <begin position="1"/>
        <end position="343"/>
    </location>
</feature>
<feature type="binding site" evidence="1">
    <location>
        <begin position="61"/>
        <end position="66"/>
    </location>
    <ligand>
        <name>NAD(+)</name>
        <dbReference type="ChEBI" id="CHEBI:57540"/>
    </ligand>
</feature>
<feature type="binding site" evidence="1">
    <location>
        <begin position="95"/>
        <end position="99"/>
    </location>
    <ligand>
        <name>NAD(+)</name>
        <dbReference type="ChEBI" id="CHEBI:57540"/>
    </ligand>
</feature>
<feature type="binding site" evidence="1">
    <location>
        <begin position="119"/>
        <end position="120"/>
    </location>
    <ligand>
        <name>NAD(+)</name>
        <dbReference type="ChEBI" id="CHEBI:57540"/>
    </ligand>
</feature>
<feature type="binding site" evidence="1">
    <location>
        <position position="132"/>
    </location>
    <ligand>
        <name>NAD(+)</name>
        <dbReference type="ChEBI" id="CHEBI:57540"/>
    </ligand>
</feature>
<feature type="binding site" evidence="1">
    <location>
        <position position="141"/>
    </location>
    <ligand>
        <name>NAD(+)</name>
        <dbReference type="ChEBI" id="CHEBI:57540"/>
    </ligand>
</feature>
<feature type="binding site" evidence="1">
    <location>
        <begin position="159"/>
        <end position="162"/>
    </location>
    <ligand>
        <name>NAD(+)</name>
        <dbReference type="ChEBI" id="CHEBI:57540"/>
    </ligand>
</feature>
<feature type="binding site" evidence="1">
    <location>
        <position position="174"/>
    </location>
    <ligand>
        <name>Zn(2+)</name>
        <dbReference type="ChEBI" id="CHEBI:29105"/>
    </ligand>
</feature>
<feature type="binding site" evidence="1">
    <location>
        <position position="231"/>
    </location>
    <ligand>
        <name>Zn(2+)</name>
        <dbReference type="ChEBI" id="CHEBI:29105"/>
    </ligand>
</feature>
<feature type="binding site" evidence="1">
    <location>
        <position position="248"/>
    </location>
    <ligand>
        <name>Zn(2+)</name>
        <dbReference type="ChEBI" id="CHEBI:29105"/>
    </ligand>
</feature>
<dbReference type="EC" id="4.2.3.4" evidence="1"/>
<dbReference type="EMBL" id="AE001439">
    <property type="protein sequence ID" value="AAD05849.1"/>
    <property type="molecule type" value="Genomic_DNA"/>
</dbReference>
<dbReference type="PIR" id="E71952">
    <property type="entry name" value="E71952"/>
</dbReference>
<dbReference type="RefSeq" id="WP_001156128.1">
    <property type="nucleotide sequence ID" value="NC_000921.1"/>
</dbReference>
<dbReference type="SMR" id="Q9ZMF2"/>
<dbReference type="KEGG" id="hpj:jhp_0268"/>
<dbReference type="eggNOG" id="COG0337">
    <property type="taxonomic scope" value="Bacteria"/>
</dbReference>
<dbReference type="UniPathway" id="UPA00053">
    <property type="reaction ID" value="UER00085"/>
</dbReference>
<dbReference type="Proteomes" id="UP000000804">
    <property type="component" value="Chromosome"/>
</dbReference>
<dbReference type="GO" id="GO:0005737">
    <property type="term" value="C:cytoplasm"/>
    <property type="evidence" value="ECO:0007669"/>
    <property type="project" value="UniProtKB-SubCell"/>
</dbReference>
<dbReference type="GO" id="GO:0003856">
    <property type="term" value="F:3-dehydroquinate synthase activity"/>
    <property type="evidence" value="ECO:0007669"/>
    <property type="project" value="UniProtKB-UniRule"/>
</dbReference>
<dbReference type="GO" id="GO:0046872">
    <property type="term" value="F:metal ion binding"/>
    <property type="evidence" value="ECO:0007669"/>
    <property type="project" value="UniProtKB-KW"/>
</dbReference>
<dbReference type="GO" id="GO:0000166">
    <property type="term" value="F:nucleotide binding"/>
    <property type="evidence" value="ECO:0007669"/>
    <property type="project" value="UniProtKB-KW"/>
</dbReference>
<dbReference type="GO" id="GO:0008652">
    <property type="term" value="P:amino acid biosynthetic process"/>
    <property type="evidence" value="ECO:0007669"/>
    <property type="project" value="UniProtKB-KW"/>
</dbReference>
<dbReference type="GO" id="GO:0009073">
    <property type="term" value="P:aromatic amino acid family biosynthetic process"/>
    <property type="evidence" value="ECO:0007669"/>
    <property type="project" value="UniProtKB-KW"/>
</dbReference>
<dbReference type="GO" id="GO:0009423">
    <property type="term" value="P:chorismate biosynthetic process"/>
    <property type="evidence" value="ECO:0007669"/>
    <property type="project" value="UniProtKB-UniRule"/>
</dbReference>
<dbReference type="CDD" id="cd08195">
    <property type="entry name" value="DHQS"/>
    <property type="match status" value="1"/>
</dbReference>
<dbReference type="FunFam" id="3.40.50.1970:FF:000030">
    <property type="entry name" value="3-dehydroquinate synthase"/>
    <property type="match status" value="1"/>
</dbReference>
<dbReference type="Gene3D" id="3.40.50.1970">
    <property type="match status" value="1"/>
</dbReference>
<dbReference type="Gene3D" id="1.20.1090.10">
    <property type="entry name" value="Dehydroquinate synthase-like - alpha domain"/>
    <property type="match status" value="1"/>
</dbReference>
<dbReference type="HAMAP" id="MF_00110">
    <property type="entry name" value="DHQ_synthase"/>
    <property type="match status" value="1"/>
</dbReference>
<dbReference type="InterPro" id="IPR050071">
    <property type="entry name" value="Dehydroquinate_synthase"/>
</dbReference>
<dbReference type="InterPro" id="IPR016037">
    <property type="entry name" value="DHQ_synth_AroB"/>
</dbReference>
<dbReference type="InterPro" id="IPR030963">
    <property type="entry name" value="DHQ_synth_fam"/>
</dbReference>
<dbReference type="InterPro" id="IPR030960">
    <property type="entry name" value="DHQS/DOIS_N"/>
</dbReference>
<dbReference type="InterPro" id="IPR056179">
    <property type="entry name" value="DHQS_C"/>
</dbReference>
<dbReference type="NCBIfam" id="TIGR01357">
    <property type="entry name" value="aroB"/>
    <property type="match status" value="1"/>
</dbReference>
<dbReference type="PANTHER" id="PTHR43622">
    <property type="entry name" value="3-DEHYDROQUINATE SYNTHASE"/>
    <property type="match status" value="1"/>
</dbReference>
<dbReference type="PANTHER" id="PTHR43622:SF7">
    <property type="entry name" value="3-DEHYDROQUINATE SYNTHASE, CHLOROPLASTIC"/>
    <property type="match status" value="1"/>
</dbReference>
<dbReference type="Pfam" id="PF01761">
    <property type="entry name" value="DHQ_synthase"/>
    <property type="match status" value="1"/>
</dbReference>
<dbReference type="Pfam" id="PF24621">
    <property type="entry name" value="DHQS_C"/>
    <property type="match status" value="1"/>
</dbReference>
<dbReference type="PIRSF" id="PIRSF001455">
    <property type="entry name" value="DHQ_synth"/>
    <property type="match status" value="1"/>
</dbReference>
<dbReference type="SUPFAM" id="SSF56796">
    <property type="entry name" value="Dehydroquinate synthase-like"/>
    <property type="match status" value="1"/>
</dbReference>
<reference key="1">
    <citation type="journal article" date="1999" name="Nature">
        <title>Genomic sequence comparison of two unrelated isolates of the human gastric pathogen Helicobacter pylori.</title>
        <authorList>
            <person name="Alm R.A."/>
            <person name="Ling L.-S.L."/>
            <person name="Moir D.T."/>
            <person name="King B.L."/>
            <person name="Brown E.D."/>
            <person name="Doig P.C."/>
            <person name="Smith D.R."/>
            <person name="Noonan B."/>
            <person name="Guild B.C."/>
            <person name="deJonge B.L."/>
            <person name="Carmel G."/>
            <person name="Tummino P.J."/>
            <person name="Caruso A."/>
            <person name="Uria-Nickelsen M."/>
            <person name="Mills D.M."/>
            <person name="Ives C."/>
            <person name="Gibson R."/>
            <person name="Merberg D."/>
            <person name="Mills S.D."/>
            <person name="Jiang Q."/>
            <person name="Taylor D.E."/>
            <person name="Vovis G.F."/>
            <person name="Trust T.J."/>
        </authorList>
    </citation>
    <scope>NUCLEOTIDE SEQUENCE [LARGE SCALE GENOMIC DNA]</scope>
    <source>
        <strain>J99 / ATCC 700824</strain>
    </source>
</reference>